<protein>
    <recommendedName>
        <fullName evidence="1">GTPase Der</fullName>
    </recommendedName>
    <alternativeName>
        <fullName evidence="1">GTP-binding protein EngA</fullName>
    </alternativeName>
</protein>
<evidence type="ECO:0000255" key="1">
    <source>
        <dbReference type="HAMAP-Rule" id="MF_00195"/>
    </source>
</evidence>
<proteinExistence type="inferred from homology"/>
<comment type="function">
    <text evidence="1">GTPase that plays an essential role in the late steps of ribosome biogenesis.</text>
</comment>
<comment type="subunit">
    <text evidence="1">Associates with the 50S ribosomal subunit.</text>
</comment>
<comment type="similarity">
    <text evidence="1">Belongs to the TRAFAC class TrmE-Era-EngA-EngB-Septin-like GTPase superfamily. EngA (Der) GTPase family.</text>
</comment>
<keyword id="KW-0342">GTP-binding</keyword>
<keyword id="KW-0547">Nucleotide-binding</keyword>
<keyword id="KW-0677">Repeat</keyword>
<keyword id="KW-0690">Ribosome biogenesis</keyword>
<dbReference type="EMBL" id="FM200053">
    <property type="protein sequence ID" value="CAR58446.1"/>
    <property type="molecule type" value="Genomic_DNA"/>
</dbReference>
<dbReference type="RefSeq" id="WP_000249411.1">
    <property type="nucleotide sequence ID" value="NC_011147.1"/>
</dbReference>
<dbReference type="SMR" id="B5BAY9"/>
<dbReference type="KEGG" id="sek:SSPA0328"/>
<dbReference type="HOGENOM" id="CLU_016077_6_2_6"/>
<dbReference type="Proteomes" id="UP000001869">
    <property type="component" value="Chromosome"/>
</dbReference>
<dbReference type="GO" id="GO:0005525">
    <property type="term" value="F:GTP binding"/>
    <property type="evidence" value="ECO:0007669"/>
    <property type="project" value="UniProtKB-UniRule"/>
</dbReference>
<dbReference type="GO" id="GO:0043022">
    <property type="term" value="F:ribosome binding"/>
    <property type="evidence" value="ECO:0007669"/>
    <property type="project" value="TreeGrafter"/>
</dbReference>
<dbReference type="GO" id="GO:0042254">
    <property type="term" value="P:ribosome biogenesis"/>
    <property type="evidence" value="ECO:0007669"/>
    <property type="project" value="UniProtKB-KW"/>
</dbReference>
<dbReference type="CDD" id="cd01894">
    <property type="entry name" value="EngA1"/>
    <property type="match status" value="1"/>
</dbReference>
<dbReference type="CDD" id="cd01895">
    <property type="entry name" value="EngA2"/>
    <property type="match status" value="1"/>
</dbReference>
<dbReference type="FunFam" id="3.30.300.20:FF:000004">
    <property type="entry name" value="GTPase Der"/>
    <property type="match status" value="1"/>
</dbReference>
<dbReference type="FunFam" id="3.40.50.300:FF:000040">
    <property type="entry name" value="GTPase Der"/>
    <property type="match status" value="1"/>
</dbReference>
<dbReference type="FunFam" id="3.40.50.300:FF:000057">
    <property type="entry name" value="GTPase Der"/>
    <property type="match status" value="1"/>
</dbReference>
<dbReference type="Gene3D" id="3.30.300.20">
    <property type="match status" value="1"/>
</dbReference>
<dbReference type="Gene3D" id="3.40.50.300">
    <property type="entry name" value="P-loop containing nucleotide triphosphate hydrolases"/>
    <property type="match status" value="2"/>
</dbReference>
<dbReference type="HAMAP" id="MF_00195">
    <property type="entry name" value="GTPase_Der"/>
    <property type="match status" value="1"/>
</dbReference>
<dbReference type="InterPro" id="IPR031166">
    <property type="entry name" value="G_ENGA"/>
</dbReference>
<dbReference type="InterPro" id="IPR006073">
    <property type="entry name" value="GTP-bd"/>
</dbReference>
<dbReference type="InterPro" id="IPR016484">
    <property type="entry name" value="GTPase_Der"/>
</dbReference>
<dbReference type="InterPro" id="IPR032859">
    <property type="entry name" value="KH_dom-like"/>
</dbReference>
<dbReference type="InterPro" id="IPR015946">
    <property type="entry name" value="KH_dom-like_a/b"/>
</dbReference>
<dbReference type="InterPro" id="IPR027417">
    <property type="entry name" value="P-loop_NTPase"/>
</dbReference>
<dbReference type="InterPro" id="IPR005225">
    <property type="entry name" value="Small_GTP-bd"/>
</dbReference>
<dbReference type="NCBIfam" id="TIGR03594">
    <property type="entry name" value="GTPase_EngA"/>
    <property type="match status" value="1"/>
</dbReference>
<dbReference type="NCBIfam" id="TIGR00231">
    <property type="entry name" value="small_GTP"/>
    <property type="match status" value="2"/>
</dbReference>
<dbReference type="PANTHER" id="PTHR43834">
    <property type="entry name" value="GTPASE DER"/>
    <property type="match status" value="1"/>
</dbReference>
<dbReference type="PANTHER" id="PTHR43834:SF6">
    <property type="entry name" value="GTPASE DER"/>
    <property type="match status" value="1"/>
</dbReference>
<dbReference type="Pfam" id="PF14714">
    <property type="entry name" value="KH_dom-like"/>
    <property type="match status" value="1"/>
</dbReference>
<dbReference type="Pfam" id="PF01926">
    <property type="entry name" value="MMR_HSR1"/>
    <property type="match status" value="2"/>
</dbReference>
<dbReference type="PIRSF" id="PIRSF006485">
    <property type="entry name" value="GTP-binding_EngA"/>
    <property type="match status" value="1"/>
</dbReference>
<dbReference type="PRINTS" id="PR00326">
    <property type="entry name" value="GTP1OBG"/>
</dbReference>
<dbReference type="SUPFAM" id="SSF52540">
    <property type="entry name" value="P-loop containing nucleoside triphosphate hydrolases"/>
    <property type="match status" value="2"/>
</dbReference>
<dbReference type="PROSITE" id="PS51712">
    <property type="entry name" value="G_ENGA"/>
    <property type="match status" value="2"/>
</dbReference>
<accession>B5BAY9</accession>
<sequence length="490" mass="54972">MVPVVALVGRPNVGKSTLFNRLTRTRDALVADFPGLTRDRKYGRAEVEGREFICIDTGGIDGTEDGVETRMAEQSLLAIEEADVVLFMVDARAGLMPADEAIAKHLRSREKPTFLVANKTDGLDPDQAVVDFYSLGLGEIYPIAASHGRGVLSLLEHVLLPWMDDVAPQEEVDEDAEYWAQFEAEQNGEEAPEDDFDPQSLPIKLAIVGRPNVGKSTLTNRILGEERVVVYDMPGTTRDSIYIPMERDEREYVLIDTAGVRKRGKITDAVEKFSVIKTLQAIEDANVVLLVIDAREGISDQDLSLLGFILNSGRSLVIVVNKWDGLSQEVKEQVKETLDFRLGFIDFARVHFISALHGSGVGNLFESVREAYDSSTRRVSTAMLTRIMTMAVEDHQPPLVRGRRVKLKYAHAGGYNPPIVVIHGNQVKDLPDSYKRYLMNYFRKSLEVMGTPIRIQFKEGENPYANKRNTLTPTQMRKRKRLMKHIKKSK</sequence>
<name>DER_SALPK</name>
<organism>
    <name type="scientific">Salmonella paratyphi A (strain AKU_12601)</name>
    <dbReference type="NCBI Taxonomy" id="554290"/>
    <lineage>
        <taxon>Bacteria</taxon>
        <taxon>Pseudomonadati</taxon>
        <taxon>Pseudomonadota</taxon>
        <taxon>Gammaproteobacteria</taxon>
        <taxon>Enterobacterales</taxon>
        <taxon>Enterobacteriaceae</taxon>
        <taxon>Salmonella</taxon>
    </lineage>
</organism>
<reference key="1">
    <citation type="journal article" date="2009" name="BMC Genomics">
        <title>Pseudogene accumulation in the evolutionary histories of Salmonella enterica serovars Paratyphi A and Typhi.</title>
        <authorList>
            <person name="Holt K.E."/>
            <person name="Thomson N.R."/>
            <person name="Wain J."/>
            <person name="Langridge G.C."/>
            <person name="Hasan R."/>
            <person name="Bhutta Z.A."/>
            <person name="Quail M.A."/>
            <person name="Norbertczak H."/>
            <person name="Walker D."/>
            <person name="Simmonds M."/>
            <person name="White B."/>
            <person name="Bason N."/>
            <person name="Mungall K."/>
            <person name="Dougan G."/>
            <person name="Parkhill J."/>
        </authorList>
    </citation>
    <scope>NUCLEOTIDE SEQUENCE [LARGE SCALE GENOMIC DNA]</scope>
    <source>
        <strain>AKU_12601</strain>
    </source>
</reference>
<feature type="chain" id="PRO_1000099159" description="GTPase Der">
    <location>
        <begin position="1"/>
        <end position="490"/>
    </location>
</feature>
<feature type="domain" description="EngA-type G 1">
    <location>
        <begin position="3"/>
        <end position="166"/>
    </location>
</feature>
<feature type="domain" description="EngA-type G 2">
    <location>
        <begin position="203"/>
        <end position="376"/>
    </location>
</feature>
<feature type="domain" description="KH-like" evidence="1">
    <location>
        <begin position="377"/>
        <end position="461"/>
    </location>
</feature>
<feature type="binding site" evidence="1">
    <location>
        <begin position="9"/>
        <end position="16"/>
    </location>
    <ligand>
        <name>GTP</name>
        <dbReference type="ChEBI" id="CHEBI:37565"/>
        <label>1</label>
    </ligand>
</feature>
<feature type="binding site" evidence="1">
    <location>
        <begin position="56"/>
        <end position="60"/>
    </location>
    <ligand>
        <name>GTP</name>
        <dbReference type="ChEBI" id="CHEBI:37565"/>
        <label>1</label>
    </ligand>
</feature>
<feature type="binding site" evidence="1">
    <location>
        <begin position="118"/>
        <end position="121"/>
    </location>
    <ligand>
        <name>GTP</name>
        <dbReference type="ChEBI" id="CHEBI:37565"/>
        <label>1</label>
    </ligand>
</feature>
<feature type="binding site" evidence="1">
    <location>
        <begin position="209"/>
        <end position="216"/>
    </location>
    <ligand>
        <name>GTP</name>
        <dbReference type="ChEBI" id="CHEBI:37565"/>
        <label>2</label>
    </ligand>
</feature>
<feature type="binding site" evidence="1">
    <location>
        <begin position="256"/>
        <end position="260"/>
    </location>
    <ligand>
        <name>GTP</name>
        <dbReference type="ChEBI" id="CHEBI:37565"/>
        <label>2</label>
    </ligand>
</feature>
<feature type="binding site" evidence="1">
    <location>
        <begin position="321"/>
        <end position="324"/>
    </location>
    <ligand>
        <name>GTP</name>
        <dbReference type="ChEBI" id="CHEBI:37565"/>
        <label>2</label>
    </ligand>
</feature>
<gene>
    <name evidence="1" type="primary">der</name>
    <name type="synonym">engA</name>
    <name type="ordered locus">SSPA0328</name>
</gene>